<accession>P16489</accession>
<feature type="chain" id="PRO_0000083215" description="Capsid protein">
    <location>
        <begin position="1"/>
        <end position="218"/>
    </location>
</feature>
<feature type="region of interest" description="Disordered" evidence="2">
    <location>
        <begin position="1"/>
        <end position="28"/>
    </location>
</feature>
<feature type="compositionally biased region" description="Basic residues" evidence="2">
    <location>
        <begin position="11"/>
        <end position="21"/>
    </location>
</feature>
<feature type="modified residue" description="N-acetylmethionine; by host" evidence="3">
    <location>
        <position position="1"/>
    </location>
</feature>
<proteinExistence type="evidence at protein level"/>
<organismHost>
    <name type="scientific">Cucumis sativus</name>
    <name type="common">Cucumber</name>
    <dbReference type="NCBI Taxonomy" id="3659"/>
</organismHost>
<organismHost>
    <name type="scientific">Nicotiana tabacum</name>
    <name type="common">Common tobacco</name>
    <dbReference type="NCBI Taxonomy" id="4097"/>
</organismHost>
<organismHost>
    <name type="scientific">Solanum lycopersicum</name>
    <name type="common">Tomato</name>
    <name type="synonym">Lycopersicon esculentum</name>
    <dbReference type="NCBI Taxonomy" id="4081"/>
</organismHost>
<keyword id="KW-0007">Acetylation</keyword>
<keyword id="KW-0167">Capsid protein</keyword>
<keyword id="KW-0687">Ribonucleoprotein</keyword>
<keyword id="KW-0694">RNA-binding</keyword>
<keyword id="KW-1142">T=3 icosahedral capsid protein</keyword>
<keyword id="KW-0543">Viral nucleoprotein</keyword>
<keyword id="KW-0946">Virion</keyword>
<reference key="1">
    <citation type="journal article" date="1989" name="J. Gen. Virol.">
        <title>Complete nucleotide sequence of RNA 3 from cucumber mosaic virus (CMV) strain O: comparative study of nucleotide sequences and amino acid sequences among CMV strains O, Q, D and Y.</title>
        <authorList>
            <person name="Hayakawa T."/>
            <person name="Mizukami M."/>
            <person name="Nakajima M."/>
            <person name="Suzuki M."/>
        </authorList>
    </citation>
    <scope>NUCLEOTIDE SEQUENCE [GENOMIC RNA]</scope>
</reference>
<reference key="2">
    <citation type="journal article" date="1982" name="J. Biochem.">
        <title>Micro-identification of amino-terminal acetylamino acids in proteins.</title>
        <authorList>
            <person name="Tsunasawa S."/>
            <person name="Narita K."/>
        </authorList>
    </citation>
    <scope>ACETYLATION AT MET-1</scope>
</reference>
<gene>
    <name type="ORF">ORF3b</name>
</gene>
<protein>
    <recommendedName>
        <fullName>Capsid protein</fullName>
        <shortName>CP</shortName>
    </recommendedName>
    <alternativeName>
        <fullName>Coat protein</fullName>
    </alternativeName>
</protein>
<name>CAPSD_CMVO</name>
<sequence length="218" mass="24272">MDKSESTSAGRNRRRRPRRGSRSAPSSADANFRVLSQQLSRLNKTLAAGRPTINHPTFVGSERCKPGYTFTSITLKPPKIDRGSYYGKRLLLPDSVTEYDKKLVSRIQIRVNPLPKFDSTVWVTVRKVPASSDLSVAAISAMFADGASPVLVYQYAAFGVQANNKLLYDLSAMRADIGDMRKYAVLVYSKDDALETDELVLHVDIEHQRIPTSRVLPV</sequence>
<evidence type="ECO:0000250" key="1"/>
<evidence type="ECO:0000256" key="2">
    <source>
        <dbReference type="SAM" id="MobiDB-lite"/>
    </source>
</evidence>
<evidence type="ECO:0000269" key="3">
    <source>
    </source>
</evidence>
<evidence type="ECO:0000305" key="4"/>
<dbReference type="EMBL" id="D00385">
    <property type="protein sequence ID" value="BAA00297.1"/>
    <property type="molecule type" value="Genomic_RNA"/>
</dbReference>
<dbReference type="PIR" id="JS0090">
    <property type="entry name" value="JS0090"/>
</dbReference>
<dbReference type="SMR" id="P16489"/>
<dbReference type="iPTMnet" id="P16489"/>
<dbReference type="GO" id="GO:1990904">
    <property type="term" value="C:ribonucleoprotein complex"/>
    <property type="evidence" value="ECO:0007669"/>
    <property type="project" value="UniProtKB-KW"/>
</dbReference>
<dbReference type="GO" id="GO:0039617">
    <property type="term" value="C:T=3 icosahedral viral capsid"/>
    <property type="evidence" value="ECO:0007669"/>
    <property type="project" value="UniProtKB-KW"/>
</dbReference>
<dbReference type="GO" id="GO:0019013">
    <property type="term" value="C:viral nucleocapsid"/>
    <property type="evidence" value="ECO:0007669"/>
    <property type="project" value="UniProtKB-KW"/>
</dbReference>
<dbReference type="GO" id="GO:0003723">
    <property type="term" value="F:RNA binding"/>
    <property type="evidence" value="ECO:0007669"/>
    <property type="project" value="UniProtKB-KW"/>
</dbReference>
<dbReference type="GO" id="GO:0005198">
    <property type="term" value="F:structural molecule activity"/>
    <property type="evidence" value="ECO:0007669"/>
    <property type="project" value="InterPro"/>
</dbReference>
<dbReference type="Gene3D" id="2.60.120.530">
    <property type="entry name" value="Cucumovirus coat protein, subunit A"/>
    <property type="match status" value="1"/>
</dbReference>
<dbReference type="InterPro" id="IPR000247">
    <property type="entry name" value="Cucumovirus_coat"/>
</dbReference>
<dbReference type="InterPro" id="IPR037137">
    <property type="entry name" value="Cucumovirus_coat_Asu_sf"/>
</dbReference>
<dbReference type="Pfam" id="PF00760">
    <property type="entry name" value="Cucumo_coat"/>
    <property type="match status" value="1"/>
</dbReference>
<dbReference type="PRINTS" id="PR00222">
    <property type="entry name" value="CUCUMOCOAT"/>
</dbReference>
<dbReference type="SUPFAM" id="SSF88633">
    <property type="entry name" value="Positive stranded ssRNA viruses"/>
    <property type="match status" value="1"/>
</dbReference>
<comment type="function">
    <text evidence="1">Capsid protein. Probably binds RNA and plays a role in packaging (By similarity).</text>
</comment>
<comment type="subcellular location">
    <subcellularLocation>
        <location evidence="4">Virion</location>
    </subcellularLocation>
</comment>
<comment type="domain">
    <text evidence="1">The N-terminal arginine-rich stretch does not seem to be the major RNA-binding region that allows formation of an infectious ribonucleoprotein complex.</text>
</comment>
<comment type="similarity">
    <text evidence="4">Belongs to the cucumovirus capsid protein family.</text>
</comment>
<organism>
    <name type="scientific">Cucumber mosaic virus (strain O)</name>
    <name type="common">CMV</name>
    <dbReference type="NCBI Taxonomy" id="12309"/>
    <lineage>
        <taxon>Viruses</taxon>
        <taxon>Riboviria</taxon>
        <taxon>Orthornavirae</taxon>
        <taxon>Kitrinoviricota</taxon>
        <taxon>Alsuviricetes</taxon>
        <taxon>Martellivirales</taxon>
        <taxon>Bromoviridae</taxon>
        <taxon>Cucumovirus</taxon>
        <taxon>Cucumber mosaic virus</taxon>
    </lineage>
</organism>